<gene>
    <name type="ORF">ORF119</name>
</gene>
<evidence type="ECO:0000255" key="1"/>
<proteinExistence type="predicted"/>
<reference key="1">
    <citation type="journal article" date="2005" name="J. Bacteriol.">
        <title>Structure and genome organization of AFV2, a novel archaeal lipothrixvirus with unusual terminal and core structures.</title>
        <authorList>
            <person name="Haring M."/>
            <person name="Vestergaard G."/>
            <person name="Brugger K."/>
            <person name="Rachel R."/>
            <person name="Garrett R.A."/>
            <person name="Prangishvili D."/>
        </authorList>
    </citation>
    <scope>NUCLEOTIDE SEQUENCE [GENOMIC DNA]</scope>
</reference>
<organismHost>
    <name type="scientific">Acidianus sp. F28</name>
    <dbReference type="NCBI Taxonomy" id="315458"/>
</organismHost>
<name>Y119_AFV2P</name>
<sequence>MKKVGEEEIKQEENEKEKIVKKLNESDVKSIIEDVLKNKEKYGLEARWLLGMDDNKNDSIEVLLGRVNFIEVERGFIEIVPMTRMVVLLKRVNYYTSNYTSYNDELYVFFYSVGWVKFS</sequence>
<accession>Q573G8</accession>
<keyword id="KW-0175">Coiled coil</keyword>
<keyword id="KW-1185">Reference proteome</keyword>
<dbReference type="EMBL" id="AJ854042">
    <property type="protein sequence ID" value="CAH69388.1"/>
    <property type="molecule type" value="Genomic_DNA"/>
</dbReference>
<dbReference type="RefSeq" id="YP_001496926.1">
    <property type="nucleotide sequence ID" value="NC_009884.1"/>
</dbReference>
<dbReference type="SMR" id="Q573G8"/>
<dbReference type="KEGG" id="vg:5656064"/>
<dbReference type="Proteomes" id="UP000006364">
    <property type="component" value="Genome"/>
</dbReference>
<protein>
    <recommendedName>
        <fullName>Uncharacterized protein ORF119</fullName>
    </recommendedName>
</protein>
<organism>
    <name type="scientific">Acidianus filamentous virus 2 (isolate Italy/Pozzuoli)</name>
    <name type="common">AFV-2</name>
    <dbReference type="NCBI Taxonomy" id="654910"/>
    <lineage>
        <taxon>Viruses</taxon>
        <taxon>Adnaviria</taxon>
        <taxon>Zilligvirae</taxon>
        <taxon>Taleaviricota</taxon>
        <taxon>Tokiviricetes</taxon>
        <taxon>Ligamenvirales</taxon>
        <taxon>Lipothrixviridae</taxon>
        <taxon>Deltalipothrixvirus</taxon>
        <taxon>Acidianus filamentous virus 2</taxon>
    </lineage>
</organism>
<feature type="chain" id="PRO_0000384506" description="Uncharacterized protein ORF119">
    <location>
        <begin position="1"/>
        <end position="119"/>
    </location>
</feature>
<feature type="coiled-coil region" evidence="1">
    <location>
        <begin position="1"/>
        <end position="29"/>
    </location>
</feature>